<protein>
    <recommendedName>
        <fullName evidence="1">UPF0325 protein HCH_00487</fullName>
    </recommendedName>
</protein>
<accession>Q2SPM9</accession>
<name>Y487_HAHCH</name>
<organism>
    <name type="scientific">Hahella chejuensis (strain KCTC 2396)</name>
    <dbReference type="NCBI Taxonomy" id="349521"/>
    <lineage>
        <taxon>Bacteria</taxon>
        <taxon>Pseudomonadati</taxon>
        <taxon>Pseudomonadota</taxon>
        <taxon>Gammaproteobacteria</taxon>
        <taxon>Oceanospirillales</taxon>
        <taxon>Hahellaceae</taxon>
        <taxon>Hahella</taxon>
    </lineage>
</organism>
<comment type="similarity">
    <text evidence="1">Belongs to the UPF0325 family.</text>
</comment>
<feature type="chain" id="PRO_0000289320" description="UPF0325 protein HCH_00487">
    <location>
        <begin position="1"/>
        <end position="129"/>
    </location>
</feature>
<proteinExistence type="inferred from homology"/>
<gene>
    <name type="ordered locus">HCH_00487</name>
</gene>
<sequence length="129" mass="15190">MTDHLKHIGVADPQRIEKYTLRTEAENDILKIYYKKEKGDLFHRSLKVKFPRLQKQLLVDSGGAKRYENTSEIAPNLLHVLDELDKITSKETEQVDVKEKILKDLRHLERVVNNKIKEIERDLDKLSSR</sequence>
<evidence type="ECO:0000255" key="1">
    <source>
        <dbReference type="HAMAP-Rule" id="MF_01519"/>
    </source>
</evidence>
<reference key="1">
    <citation type="journal article" date="2005" name="Nucleic Acids Res.">
        <title>Genomic blueprint of Hahella chejuensis, a marine microbe producing an algicidal agent.</title>
        <authorList>
            <person name="Jeong H."/>
            <person name="Yim J.H."/>
            <person name="Lee C."/>
            <person name="Choi S.-H."/>
            <person name="Park Y.K."/>
            <person name="Yoon S.H."/>
            <person name="Hur C.-G."/>
            <person name="Kang H.-Y."/>
            <person name="Kim D."/>
            <person name="Lee H.H."/>
            <person name="Park K.H."/>
            <person name="Park S.-H."/>
            <person name="Park H.-S."/>
            <person name="Lee H.K."/>
            <person name="Oh T.K."/>
            <person name="Kim J.F."/>
        </authorList>
    </citation>
    <scope>NUCLEOTIDE SEQUENCE [LARGE SCALE GENOMIC DNA]</scope>
    <source>
        <strain>KCTC 2396</strain>
    </source>
</reference>
<dbReference type="EMBL" id="CP000155">
    <property type="protein sequence ID" value="ABC27395.1"/>
    <property type="molecule type" value="Genomic_DNA"/>
</dbReference>
<dbReference type="RefSeq" id="WP_011394472.1">
    <property type="nucleotide sequence ID" value="NC_007645.1"/>
</dbReference>
<dbReference type="SMR" id="Q2SPM9"/>
<dbReference type="STRING" id="349521.HCH_00487"/>
<dbReference type="KEGG" id="hch:HCH_00487"/>
<dbReference type="eggNOG" id="ENOG502ZBV4">
    <property type="taxonomic scope" value="Bacteria"/>
</dbReference>
<dbReference type="HOGENOM" id="CLU_136774_0_0_6"/>
<dbReference type="OrthoDB" id="5624524at2"/>
<dbReference type="Proteomes" id="UP000000238">
    <property type="component" value="Chromosome"/>
</dbReference>
<dbReference type="HAMAP" id="MF_01519">
    <property type="entry name" value="UPF0325"/>
    <property type="match status" value="1"/>
</dbReference>
<dbReference type="InterPro" id="IPR020911">
    <property type="entry name" value="UPF0325"/>
</dbReference>
<dbReference type="NCBIfam" id="NF010213">
    <property type="entry name" value="PRK13677.1"/>
    <property type="match status" value="1"/>
</dbReference>
<dbReference type="Pfam" id="PF11944">
    <property type="entry name" value="DUF3461"/>
    <property type="match status" value="1"/>
</dbReference>
<keyword id="KW-1185">Reference proteome</keyword>